<keyword id="KW-0119">Carbohydrate metabolism</keyword>
<keyword id="KW-0963">Cytoplasm</keyword>
<keyword id="KW-0378">Hydrolase</keyword>
<keyword id="KW-0464">Manganese</keyword>
<keyword id="KW-0479">Metal-binding</keyword>
<keyword id="KW-1185">Reference proteome</keyword>
<reference key="1">
    <citation type="journal article" date="1992" name="J. Bacteriol.">
        <title>Molecular analysis of the glpFKX regions of Escherichia coli and Shigella flexneri.</title>
        <authorList>
            <person name="Truniger V."/>
            <person name="Boos W."/>
            <person name="Sweet G."/>
        </authorList>
    </citation>
    <scope>NUCLEOTIDE SEQUENCE [GENOMIC DNA]</scope>
    <source>
        <strain>M4232</strain>
    </source>
</reference>
<reference key="2">
    <citation type="journal article" date="2002" name="Nucleic Acids Res.">
        <title>Genome sequence of Shigella flexneri 2a: insights into pathogenicity through comparison with genomes of Escherichia coli K12 and O157.</title>
        <authorList>
            <person name="Jin Q."/>
            <person name="Yuan Z."/>
            <person name="Xu J."/>
            <person name="Wang Y."/>
            <person name="Shen Y."/>
            <person name="Lu W."/>
            <person name="Wang J."/>
            <person name="Liu H."/>
            <person name="Yang J."/>
            <person name="Yang F."/>
            <person name="Zhang X."/>
            <person name="Zhang J."/>
            <person name="Yang G."/>
            <person name="Wu H."/>
            <person name="Qu D."/>
            <person name="Dong J."/>
            <person name="Sun L."/>
            <person name="Xue Y."/>
            <person name="Zhao A."/>
            <person name="Gao Y."/>
            <person name="Zhu J."/>
            <person name="Kan B."/>
            <person name="Ding K."/>
            <person name="Chen S."/>
            <person name="Cheng H."/>
            <person name="Yao Z."/>
            <person name="He B."/>
            <person name="Chen R."/>
            <person name="Ma D."/>
            <person name="Qiang B."/>
            <person name="Wen Y."/>
            <person name="Hou Y."/>
            <person name="Yu J."/>
        </authorList>
    </citation>
    <scope>NUCLEOTIDE SEQUENCE [LARGE SCALE GENOMIC DNA]</scope>
    <source>
        <strain>301 / Serotype 2a</strain>
    </source>
</reference>
<reference key="3">
    <citation type="journal article" date="2003" name="Infect. Immun.">
        <title>Complete genome sequence and comparative genomics of Shigella flexneri serotype 2a strain 2457T.</title>
        <authorList>
            <person name="Wei J."/>
            <person name="Goldberg M.B."/>
            <person name="Burland V."/>
            <person name="Venkatesan M.M."/>
            <person name="Deng W."/>
            <person name="Fournier G."/>
            <person name="Mayhew G.F."/>
            <person name="Plunkett G. III"/>
            <person name="Rose D.J."/>
            <person name="Darling A."/>
            <person name="Mau B."/>
            <person name="Perna N.T."/>
            <person name="Payne S.M."/>
            <person name="Runyen-Janecky L.J."/>
            <person name="Zhou S."/>
            <person name="Schwartz D.C."/>
            <person name="Blattner F.R."/>
        </authorList>
    </citation>
    <scope>NUCLEOTIDE SEQUENCE [LARGE SCALE GENOMIC DNA]</scope>
    <source>
        <strain>ATCC 700930 / 2457T / Serotype 2a</strain>
    </source>
</reference>
<gene>
    <name type="primary">glpX</name>
    <name type="ordered locus">SF4003</name>
    <name type="ordered locus">S3744</name>
</gene>
<evidence type="ECO:0000250" key="1"/>
<evidence type="ECO:0000305" key="2"/>
<accession>P0A9D1</accession>
<accession>P11007</accession>
<accession>P28860</accession>
<accession>P28900</accession>
<sequence length="336" mass="35852">MRRELAIEFSRVTESAALAGYKWLGRGDKNTADGAAVNAMRIMLNQVNIDGTIVIGEGEIDEAPMLYIGEKVGTGRGDAVDIAVDPIEGTRMTAMGQANALAVLAVGDKGCFLNAPDMYMEKLIVGPGAKGTIDLNLPLADNLRNVAAALGKPLSELTVTILAKPRHDAVIAEMQQLGVRVFAIPDGDVAASILTCMPDSEVDVLYGIGGAPEGVVSAAVIRALDGDMNGRLLARHDVKGDNEENRRIGEQELARCKAMGIEAGKVLRLGDMARSDNVIFSATGITKGDLLEGISRKGNIATTETLLIRGKSRTIRRIQSIHYLDRKDPEMQVHIL</sequence>
<protein>
    <recommendedName>
        <fullName>Fructose-1,6-bisphosphatase class 2</fullName>
        <shortName>FBPase class 2</shortName>
        <ecNumber>3.1.3.11</ecNumber>
    </recommendedName>
    <alternativeName>
        <fullName>D-fructose-1,6-bisphosphate 1-phosphohydrolase class 2</fullName>
    </alternativeName>
</protein>
<proteinExistence type="inferred from homology"/>
<organism>
    <name type="scientific">Shigella flexneri</name>
    <dbReference type="NCBI Taxonomy" id="623"/>
    <lineage>
        <taxon>Bacteria</taxon>
        <taxon>Pseudomonadati</taxon>
        <taxon>Pseudomonadota</taxon>
        <taxon>Gammaproteobacteria</taxon>
        <taxon>Enterobacterales</taxon>
        <taxon>Enterobacteriaceae</taxon>
        <taxon>Shigella</taxon>
    </lineage>
</organism>
<feature type="chain" id="PRO_0000201103" description="Fructose-1,6-bisphosphatase class 2">
    <location>
        <begin position="1"/>
        <end position="336"/>
    </location>
</feature>
<feature type="binding site" evidence="1">
    <location>
        <position position="33"/>
    </location>
    <ligand>
        <name>Mn(2+)</name>
        <dbReference type="ChEBI" id="CHEBI:29035"/>
        <label>1</label>
    </ligand>
</feature>
<feature type="binding site" evidence="1">
    <location>
        <position position="57"/>
    </location>
    <ligand>
        <name>Mn(2+)</name>
        <dbReference type="ChEBI" id="CHEBI:29035"/>
        <label>1</label>
    </ligand>
</feature>
<feature type="binding site" evidence="1">
    <location>
        <position position="85"/>
    </location>
    <ligand>
        <name>Mn(2+)</name>
        <dbReference type="ChEBI" id="CHEBI:29035"/>
        <label>2</label>
    </ligand>
</feature>
<feature type="binding site" evidence="1">
    <location>
        <begin position="88"/>
        <end position="90"/>
    </location>
    <ligand>
        <name>substrate</name>
    </ligand>
</feature>
<feature type="binding site" evidence="1">
    <location>
        <position position="88"/>
    </location>
    <ligand>
        <name>Mn(2+)</name>
        <dbReference type="ChEBI" id="CHEBI:29035"/>
        <label>2</label>
    </ligand>
</feature>
<feature type="binding site" evidence="1">
    <location>
        <position position="119"/>
    </location>
    <ligand>
        <name>substrate</name>
    </ligand>
</feature>
<feature type="binding site" evidence="1">
    <location>
        <begin position="164"/>
        <end position="166"/>
    </location>
    <ligand>
        <name>substrate</name>
    </ligand>
</feature>
<feature type="binding site" evidence="1">
    <location>
        <begin position="186"/>
        <end position="188"/>
    </location>
    <ligand>
        <name>substrate</name>
    </ligand>
</feature>
<feature type="binding site" evidence="1">
    <location>
        <position position="210"/>
    </location>
    <ligand>
        <name>substrate</name>
    </ligand>
</feature>
<feature type="binding site" evidence="1">
    <location>
        <position position="213"/>
    </location>
    <ligand>
        <name>Mn(2+)</name>
        <dbReference type="ChEBI" id="CHEBI:29035"/>
        <label>2</label>
    </ligand>
</feature>
<feature type="sequence conflict" description="In Ref. 1; CAA77812." evidence="2" ref="1">
    <original>V</original>
    <variation>G</variation>
    <location>
        <position position="215"/>
    </location>
</feature>
<name>GLPX_SHIFL</name>
<comment type="function">
    <text evidence="1">Catalyzes the hydrolysis of fructose 1,6-bisphosphate to fructose 6-phosphate.</text>
</comment>
<comment type="catalytic activity">
    <reaction>
        <text>beta-D-fructose 1,6-bisphosphate + H2O = beta-D-fructose 6-phosphate + phosphate</text>
        <dbReference type="Rhea" id="RHEA:11064"/>
        <dbReference type="ChEBI" id="CHEBI:15377"/>
        <dbReference type="ChEBI" id="CHEBI:32966"/>
        <dbReference type="ChEBI" id="CHEBI:43474"/>
        <dbReference type="ChEBI" id="CHEBI:57634"/>
        <dbReference type="EC" id="3.1.3.11"/>
    </reaction>
</comment>
<comment type="cofactor">
    <cofactor evidence="1">
        <name>Mn(2+)</name>
        <dbReference type="ChEBI" id="CHEBI:29035"/>
    </cofactor>
</comment>
<comment type="pathway">
    <text>Carbohydrate biosynthesis; gluconeogenesis.</text>
</comment>
<comment type="subunit">
    <text evidence="1">Homodimer.</text>
</comment>
<comment type="subcellular location">
    <subcellularLocation>
        <location evidence="2">Cytoplasm</location>
    </subcellularLocation>
</comment>
<comment type="similarity">
    <text evidence="2">Belongs to the FBPase class 2 family.</text>
</comment>
<dbReference type="EC" id="3.1.3.11"/>
<dbReference type="EMBL" id="Z11766">
    <property type="protein sequence ID" value="CAA77812.1"/>
    <property type="molecule type" value="Genomic_DNA"/>
</dbReference>
<dbReference type="EMBL" id="AE005674">
    <property type="protein sequence ID" value="AAN45436.1"/>
    <property type="molecule type" value="Genomic_DNA"/>
</dbReference>
<dbReference type="EMBL" id="AE014073">
    <property type="protein sequence ID" value="AAP18764.1"/>
    <property type="molecule type" value="Genomic_DNA"/>
</dbReference>
<dbReference type="PIR" id="S23905">
    <property type="entry name" value="S23905"/>
</dbReference>
<dbReference type="RefSeq" id="NP_709729.1">
    <property type="nucleotide sequence ID" value="NC_004337.2"/>
</dbReference>
<dbReference type="RefSeq" id="WP_001250644.1">
    <property type="nucleotide sequence ID" value="NZ_WPGW01000012.1"/>
</dbReference>
<dbReference type="SMR" id="P0A9D1"/>
<dbReference type="STRING" id="198214.SF4003"/>
<dbReference type="PaxDb" id="198214-SF4003"/>
<dbReference type="GeneID" id="1027784"/>
<dbReference type="GeneID" id="93777973"/>
<dbReference type="KEGG" id="sfl:SF4003"/>
<dbReference type="KEGG" id="sfx:S3744"/>
<dbReference type="PATRIC" id="fig|198214.7.peg.4717"/>
<dbReference type="HOGENOM" id="CLU_054938_0_0_6"/>
<dbReference type="UniPathway" id="UPA00138"/>
<dbReference type="Proteomes" id="UP000001006">
    <property type="component" value="Chromosome"/>
</dbReference>
<dbReference type="Proteomes" id="UP000002673">
    <property type="component" value="Chromosome"/>
</dbReference>
<dbReference type="GO" id="GO:0005829">
    <property type="term" value="C:cytosol"/>
    <property type="evidence" value="ECO:0007669"/>
    <property type="project" value="TreeGrafter"/>
</dbReference>
<dbReference type="GO" id="GO:0042132">
    <property type="term" value="F:fructose 1,6-bisphosphate 1-phosphatase activity"/>
    <property type="evidence" value="ECO:0007669"/>
    <property type="project" value="UniProtKB-EC"/>
</dbReference>
<dbReference type="GO" id="GO:0046872">
    <property type="term" value="F:metal ion binding"/>
    <property type="evidence" value="ECO:0007669"/>
    <property type="project" value="UniProtKB-KW"/>
</dbReference>
<dbReference type="GO" id="GO:0030388">
    <property type="term" value="P:fructose 1,6-bisphosphate metabolic process"/>
    <property type="evidence" value="ECO:0007669"/>
    <property type="project" value="TreeGrafter"/>
</dbReference>
<dbReference type="GO" id="GO:0006094">
    <property type="term" value="P:gluconeogenesis"/>
    <property type="evidence" value="ECO:0007669"/>
    <property type="project" value="UniProtKB-UniPathway"/>
</dbReference>
<dbReference type="GO" id="GO:0006071">
    <property type="term" value="P:glycerol metabolic process"/>
    <property type="evidence" value="ECO:0007669"/>
    <property type="project" value="InterPro"/>
</dbReference>
<dbReference type="CDD" id="cd01516">
    <property type="entry name" value="FBPase_glpX"/>
    <property type="match status" value="1"/>
</dbReference>
<dbReference type="FunFam" id="3.40.190.90:FF:000001">
    <property type="entry name" value="Fructose-1,6-bisphosphatase"/>
    <property type="match status" value="1"/>
</dbReference>
<dbReference type="Gene3D" id="3.40.190.90">
    <property type="match status" value="1"/>
</dbReference>
<dbReference type="Gene3D" id="3.30.540.10">
    <property type="entry name" value="Fructose-1,6-Bisphosphatase, subunit A, domain 1"/>
    <property type="match status" value="1"/>
</dbReference>
<dbReference type="InterPro" id="IPR004464">
    <property type="entry name" value="FBPase_class-2/SBPase"/>
</dbReference>
<dbReference type="NCBIfam" id="TIGR00330">
    <property type="entry name" value="glpX"/>
    <property type="match status" value="1"/>
</dbReference>
<dbReference type="PANTHER" id="PTHR30447:SF0">
    <property type="entry name" value="FRUCTOSE-1,6-BISPHOSPHATASE 1 CLASS 2-RELATED"/>
    <property type="match status" value="1"/>
</dbReference>
<dbReference type="PANTHER" id="PTHR30447">
    <property type="entry name" value="FRUCTOSE-1,6-BISPHOSPHATASE CLASS 2"/>
    <property type="match status" value="1"/>
</dbReference>
<dbReference type="Pfam" id="PF03320">
    <property type="entry name" value="FBPase_glpX"/>
    <property type="match status" value="1"/>
</dbReference>
<dbReference type="PIRSF" id="PIRSF004532">
    <property type="entry name" value="GlpX"/>
    <property type="match status" value="1"/>
</dbReference>
<dbReference type="SUPFAM" id="SSF56655">
    <property type="entry name" value="Carbohydrate phosphatase"/>
    <property type="match status" value="1"/>
</dbReference>